<comment type="function">
    <text evidence="3">Retina-specific kinase involved in the shutoff of the photoresponse and adaptation to changing light conditions via cone opsin phosphorylation, including rhodopsin (RHO).</text>
</comment>
<comment type="catalytic activity">
    <reaction evidence="3">
        <text>L-threonyl-[rhodopsin] + ATP = O-phospho-L-threonyl-[rhodopsin] + ADP + H(+)</text>
        <dbReference type="Rhea" id="RHEA:56552"/>
        <dbReference type="Rhea" id="RHEA-COMP:14596"/>
        <dbReference type="Rhea" id="RHEA-COMP:14597"/>
        <dbReference type="ChEBI" id="CHEBI:15378"/>
        <dbReference type="ChEBI" id="CHEBI:30013"/>
        <dbReference type="ChEBI" id="CHEBI:30616"/>
        <dbReference type="ChEBI" id="CHEBI:61977"/>
        <dbReference type="ChEBI" id="CHEBI:456216"/>
        <dbReference type="EC" id="2.7.11.14"/>
    </reaction>
</comment>
<comment type="catalytic activity">
    <reaction evidence="3">
        <text>L-seryl-[rhodopsin] + ATP = O-phospho-L-seryl-[rhodopsin] + ADP + H(+)</text>
        <dbReference type="Rhea" id="RHEA:23356"/>
        <dbReference type="Rhea" id="RHEA-COMP:14594"/>
        <dbReference type="Rhea" id="RHEA-COMP:14595"/>
        <dbReference type="ChEBI" id="CHEBI:15378"/>
        <dbReference type="ChEBI" id="CHEBI:29999"/>
        <dbReference type="ChEBI" id="CHEBI:30616"/>
        <dbReference type="ChEBI" id="CHEBI:83421"/>
        <dbReference type="ChEBI" id="CHEBI:456216"/>
        <dbReference type="EC" id="2.7.11.14"/>
    </reaction>
</comment>
<comment type="activity regulation">
    <text evidence="1">Inhibited by phosphorylation of Ser-34.</text>
</comment>
<comment type="subunit">
    <text evidence="2">Interacts (when prenylated) with PDE6D; this promotes release from membranes.</text>
</comment>
<comment type="subcellular location">
    <subcellularLocation>
        <location evidence="2">Membrane</location>
        <topology evidence="2">Lipid-anchor</topology>
    </subcellularLocation>
</comment>
<comment type="tissue specificity">
    <text evidence="10">Retina. Cones and rod.</text>
</comment>
<comment type="PTM">
    <text evidence="1">Autophosphorylated. Phosphorylation at Ser-34 is regulated by light and activated by cAMP (By similarity).</text>
</comment>
<comment type="miscellaneous">
    <text>Although the protein is present in a diversity of vertebrates ranging from bony fish to mammals, the mouse and rat orthologous proteins do not exist.</text>
</comment>
<comment type="similarity">
    <text evidence="11">Belongs to the protein kinase superfamily. AGC Ser/Thr protein kinase family. GPRK subfamily.</text>
</comment>
<organism>
    <name type="scientific">Ictidomys tridecemlineatus</name>
    <name type="common">Thirteen-lined ground squirrel</name>
    <name type="synonym">Spermophilus tridecemlineatus</name>
    <dbReference type="NCBI Taxonomy" id="43179"/>
    <lineage>
        <taxon>Eukaryota</taxon>
        <taxon>Metazoa</taxon>
        <taxon>Chordata</taxon>
        <taxon>Craniata</taxon>
        <taxon>Vertebrata</taxon>
        <taxon>Euteleostomi</taxon>
        <taxon>Mammalia</taxon>
        <taxon>Eutheria</taxon>
        <taxon>Euarchontoglires</taxon>
        <taxon>Glires</taxon>
        <taxon>Rodentia</taxon>
        <taxon>Sciuromorpha</taxon>
        <taxon>Sciuridae</taxon>
        <taxon>Xerinae</taxon>
        <taxon>Marmotini</taxon>
        <taxon>Ictidomys</taxon>
    </lineage>
</organism>
<name>GRK7_ICTTR</name>
<gene>
    <name type="primary">GRK7</name>
</gene>
<proteinExistence type="evidence at protein level"/>
<feature type="chain" id="PRO_0000024336" description="Rhodopsin kinase GRK7">
    <location>
        <begin position="1"/>
        <end position="545"/>
    </location>
</feature>
<feature type="propeptide" id="PRO_0000024337" description="Removed in mature form" evidence="1">
    <location>
        <begin position="546"/>
        <end position="548"/>
    </location>
</feature>
<feature type="domain" description="RGS" evidence="6">
    <location>
        <begin position="54"/>
        <end position="171"/>
    </location>
</feature>
<feature type="domain" description="Protein kinase" evidence="5">
    <location>
        <begin position="186"/>
        <end position="449"/>
    </location>
</feature>
<feature type="domain" description="AGC-kinase C-terminal" evidence="7">
    <location>
        <begin position="450"/>
        <end position="515"/>
    </location>
</feature>
<feature type="region of interest" description="Disordered" evidence="9">
    <location>
        <begin position="523"/>
        <end position="548"/>
    </location>
</feature>
<feature type="active site" description="Proton acceptor" evidence="5 8">
    <location>
        <position position="311"/>
    </location>
</feature>
<feature type="binding site" evidence="5">
    <location>
        <begin position="192"/>
        <end position="200"/>
    </location>
    <ligand>
        <name>ATP</name>
        <dbReference type="ChEBI" id="CHEBI:30616"/>
    </ligand>
</feature>
<feature type="binding site" evidence="5">
    <location>
        <position position="215"/>
    </location>
    <ligand>
        <name>ATP</name>
        <dbReference type="ChEBI" id="CHEBI:30616"/>
    </ligand>
</feature>
<feature type="modified residue" description="Phosphoserine; by PKA" evidence="3">
    <location>
        <position position="34"/>
    </location>
</feature>
<feature type="modified residue" description="Cysteine methyl ester" evidence="4">
    <location>
        <position position="545"/>
    </location>
</feature>
<feature type="lipid moiety-binding region" description="S-geranylgeranyl cysteine" evidence="4">
    <location>
        <position position="545"/>
    </location>
</feature>
<accession>Q9Z2G7</accession>
<evidence type="ECO:0000250" key="1"/>
<evidence type="ECO:0000250" key="2">
    <source>
        <dbReference type="UniProtKB" id="Q8WMV0"/>
    </source>
</evidence>
<evidence type="ECO:0000250" key="3">
    <source>
        <dbReference type="UniProtKB" id="Q8WTQ7"/>
    </source>
</evidence>
<evidence type="ECO:0000255" key="4"/>
<evidence type="ECO:0000255" key="5">
    <source>
        <dbReference type="PROSITE-ProRule" id="PRU00159"/>
    </source>
</evidence>
<evidence type="ECO:0000255" key="6">
    <source>
        <dbReference type="PROSITE-ProRule" id="PRU00171"/>
    </source>
</evidence>
<evidence type="ECO:0000255" key="7">
    <source>
        <dbReference type="PROSITE-ProRule" id="PRU00618"/>
    </source>
</evidence>
<evidence type="ECO:0000255" key="8">
    <source>
        <dbReference type="PROSITE-ProRule" id="PRU10027"/>
    </source>
</evidence>
<evidence type="ECO:0000256" key="9">
    <source>
        <dbReference type="SAM" id="MobiDB-lite"/>
    </source>
</evidence>
<evidence type="ECO:0000269" key="10">
    <source>
    </source>
</evidence>
<evidence type="ECO:0000305" key="11"/>
<dbReference type="EC" id="2.7.11.14" evidence="3"/>
<dbReference type="EMBL" id="AF063016">
    <property type="protein sequence ID" value="AAC95001.1"/>
    <property type="molecule type" value="mRNA"/>
</dbReference>
<dbReference type="RefSeq" id="NP_001269199.1">
    <property type="nucleotide sequence ID" value="NM_001282270.1"/>
</dbReference>
<dbReference type="SMR" id="Q9Z2G7"/>
<dbReference type="STRING" id="43179.ENSSTOP00000020054"/>
<dbReference type="GeneID" id="101975039"/>
<dbReference type="KEGG" id="iti:101975039"/>
<dbReference type="CTD" id="131890"/>
<dbReference type="eggNOG" id="KOG0986">
    <property type="taxonomic scope" value="Eukaryota"/>
</dbReference>
<dbReference type="InParanoid" id="Q9Z2G7"/>
<dbReference type="OrthoDB" id="354826at2759"/>
<dbReference type="Proteomes" id="UP000005215">
    <property type="component" value="Unassembled WGS sequence"/>
</dbReference>
<dbReference type="GO" id="GO:0005737">
    <property type="term" value="C:cytoplasm"/>
    <property type="evidence" value="ECO:0007669"/>
    <property type="project" value="TreeGrafter"/>
</dbReference>
<dbReference type="GO" id="GO:0016020">
    <property type="term" value="C:membrane"/>
    <property type="evidence" value="ECO:0007669"/>
    <property type="project" value="UniProtKB-SubCell"/>
</dbReference>
<dbReference type="GO" id="GO:0005524">
    <property type="term" value="F:ATP binding"/>
    <property type="evidence" value="ECO:0007669"/>
    <property type="project" value="UniProtKB-KW"/>
</dbReference>
<dbReference type="GO" id="GO:0050254">
    <property type="term" value="F:rhodopsin kinase activity"/>
    <property type="evidence" value="ECO:0000250"/>
    <property type="project" value="UniProtKB"/>
</dbReference>
<dbReference type="GO" id="GO:0009966">
    <property type="term" value="P:regulation of signal transduction"/>
    <property type="evidence" value="ECO:0007669"/>
    <property type="project" value="TreeGrafter"/>
</dbReference>
<dbReference type="GO" id="GO:0007165">
    <property type="term" value="P:signal transduction"/>
    <property type="evidence" value="ECO:0007669"/>
    <property type="project" value="InterPro"/>
</dbReference>
<dbReference type="GO" id="GO:0007601">
    <property type="term" value="P:visual perception"/>
    <property type="evidence" value="ECO:0007669"/>
    <property type="project" value="UniProtKB-KW"/>
</dbReference>
<dbReference type="CDD" id="cd08749">
    <property type="entry name" value="RGS_GRK7"/>
    <property type="match status" value="1"/>
</dbReference>
<dbReference type="FunFam" id="1.10.167.10:FF:000027">
    <property type="entry name" value="G protein-coupled receptor kinase"/>
    <property type="match status" value="1"/>
</dbReference>
<dbReference type="FunFam" id="1.10.510.10:FF:000074">
    <property type="entry name" value="G protein-coupled receptor kinase"/>
    <property type="match status" value="1"/>
</dbReference>
<dbReference type="Gene3D" id="3.30.200.20">
    <property type="entry name" value="Phosphorylase Kinase, domain 1"/>
    <property type="match status" value="1"/>
</dbReference>
<dbReference type="Gene3D" id="1.10.167.10">
    <property type="entry name" value="Regulator of G-protein Signalling 4, domain 2"/>
    <property type="match status" value="1"/>
</dbReference>
<dbReference type="Gene3D" id="1.10.510.10">
    <property type="entry name" value="Transferase(Phosphotransferase) domain 1"/>
    <property type="match status" value="1"/>
</dbReference>
<dbReference type="InterPro" id="IPR000961">
    <property type="entry name" value="AGC-kinase_C"/>
</dbReference>
<dbReference type="InterPro" id="IPR000239">
    <property type="entry name" value="GPCR_kinase"/>
</dbReference>
<dbReference type="InterPro" id="IPR011009">
    <property type="entry name" value="Kinase-like_dom_sf"/>
</dbReference>
<dbReference type="InterPro" id="IPR000719">
    <property type="entry name" value="Prot_kinase_dom"/>
</dbReference>
<dbReference type="InterPro" id="IPR017441">
    <property type="entry name" value="Protein_kinase_ATP_BS"/>
</dbReference>
<dbReference type="InterPro" id="IPR016137">
    <property type="entry name" value="RGS"/>
</dbReference>
<dbReference type="InterPro" id="IPR036305">
    <property type="entry name" value="RGS_sf"/>
</dbReference>
<dbReference type="InterPro" id="IPR044926">
    <property type="entry name" value="RGS_subdomain_2"/>
</dbReference>
<dbReference type="InterPro" id="IPR008271">
    <property type="entry name" value="Ser/Thr_kinase_AS"/>
</dbReference>
<dbReference type="PANTHER" id="PTHR24355">
    <property type="entry name" value="G PROTEIN-COUPLED RECEPTOR KINASE/RIBOSOMAL PROTEIN S6 KINASE"/>
    <property type="match status" value="1"/>
</dbReference>
<dbReference type="PANTHER" id="PTHR24355:SF12">
    <property type="entry name" value="RHODOPSIN KINASE GRK7"/>
    <property type="match status" value="1"/>
</dbReference>
<dbReference type="Pfam" id="PF00069">
    <property type="entry name" value="Pkinase"/>
    <property type="match status" value="1"/>
</dbReference>
<dbReference type="Pfam" id="PF00615">
    <property type="entry name" value="RGS"/>
    <property type="match status" value="1"/>
</dbReference>
<dbReference type="PRINTS" id="PR00717">
    <property type="entry name" value="GPCRKINASE"/>
</dbReference>
<dbReference type="SMART" id="SM00315">
    <property type="entry name" value="RGS"/>
    <property type="match status" value="1"/>
</dbReference>
<dbReference type="SMART" id="SM00220">
    <property type="entry name" value="S_TKc"/>
    <property type="match status" value="1"/>
</dbReference>
<dbReference type="SUPFAM" id="SSF56112">
    <property type="entry name" value="Protein kinase-like (PK-like)"/>
    <property type="match status" value="1"/>
</dbReference>
<dbReference type="SUPFAM" id="SSF48097">
    <property type="entry name" value="Regulator of G-protein signaling, RGS"/>
    <property type="match status" value="1"/>
</dbReference>
<dbReference type="PROSITE" id="PS51285">
    <property type="entry name" value="AGC_KINASE_CTER"/>
    <property type="match status" value="1"/>
</dbReference>
<dbReference type="PROSITE" id="PS00107">
    <property type="entry name" value="PROTEIN_KINASE_ATP"/>
    <property type="match status" value="1"/>
</dbReference>
<dbReference type="PROSITE" id="PS50011">
    <property type="entry name" value="PROTEIN_KINASE_DOM"/>
    <property type="match status" value="1"/>
</dbReference>
<dbReference type="PROSITE" id="PS00108">
    <property type="entry name" value="PROTEIN_KINASE_ST"/>
    <property type="match status" value="1"/>
</dbReference>
<dbReference type="PROSITE" id="PS50132">
    <property type="entry name" value="RGS"/>
    <property type="match status" value="1"/>
</dbReference>
<keyword id="KW-0067">ATP-binding</keyword>
<keyword id="KW-0418">Kinase</keyword>
<keyword id="KW-0449">Lipoprotein</keyword>
<keyword id="KW-0472">Membrane</keyword>
<keyword id="KW-0488">Methylation</keyword>
<keyword id="KW-0547">Nucleotide-binding</keyword>
<keyword id="KW-0597">Phosphoprotein</keyword>
<keyword id="KW-0636">Prenylation</keyword>
<keyword id="KW-1185">Reference proteome</keyword>
<keyword id="KW-0716">Sensory transduction</keyword>
<keyword id="KW-0723">Serine/threonine-protein kinase</keyword>
<keyword id="KW-0808">Transferase</keyword>
<keyword id="KW-0844">Vision</keyword>
<reference key="1">
    <citation type="journal article" date="1998" name="Mol. Vis.">
        <title>The cloning of GRK7, a candidate cone opsin kinase, from cone- and rod-dominant mammalian retinas.</title>
        <authorList>
            <person name="Weiss E.R."/>
            <person name="Raman D."/>
            <person name="Shirakawa S."/>
            <person name="Ducceschi M.S."/>
            <person name="Bertram P.T."/>
            <person name="Wong F."/>
            <person name="Kraft T.W."/>
            <person name="Osawa S."/>
        </authorList>
    </citation>
    <scope>NUCLEOTIDE SEQUENCE [MRNA]</scope>
    <scope>TISSUE SPECIFICITY</scope>
    <scope>AUTOPHOSPHORYLATION</scope>
    <source>
        <tissue>Retina</tissue>
    </source>
</reference>
<protein>
    <recommendedName>
        <fullName>Rhodopsin kinase GRK7</fullName>
        <ecNumber evidence="3">2.7.11.14</ecNumber>
    </recommendedName>
    <alternativeName>
        <fullName>G protein-coupled receptor kinase 7</fullName>
    </alternativeName>
    <alternativeName>
        <fullName>G protein-coupled receptor kinase GRK7</fullName>
    </alternativeName>
</protein>
<sequence>MDMGGLDNLIANTAYLQARKTDSDSRELQRRRRSLALPGPQGCAELRQSLSPHFHSLCEQQPIGRRLFRDFLATVPKYSQAVAFLEDVQNWELAEEGPAKTSTLQQLAATCARDPGPQSFLSQDLATKCRAASTDEERKTLVEQAKAETMSFLQEQPFQDFLASPFYDRFLQWKLFEMQPVSDKYFTEFRVLGKGGFGEVCAVQVRNTGKMYACKKLDKKRLKKKGGEKMALLEKEILEKVNSPFIVSLAYAFESKTHLCLVMSLMNGGDLKFHIYNVGTRGLAMSRVIFYTAQMTCGVLHLHGLGIVYRDLKPENVLLDDLGNCRLSDLGLAVEVQDDKPITQRAGTNGYMAPEILMDKASYSYPVDWFAMGCSIYEMVAGRTPFKDFKEKVSKEDLKERTMKDEVAFHHENFTEETKDICRLFLAKKPEQRLGSREKADDPRKHPFFQTVNFPRLEAGLVEPPFVPDPSVVYAKDVDEIDDFSEVRGVEFDDKDKQFFQRFSTGAVPVAWQEEIIETGLFEELNDPNRPSGDGKGDSSKSGVCLLL</sequence>